<feature type="chain" id="PRO_0000152140" description="Leucine--tRNA ligase">
    <location>
        <begin position="1"/>
        <end position="967"/>
    </location>
</feature>
<feature type="short sequence motif" description="'HIGH' region">
    <location>
        <begin position="43"/>
        <end position="53"/>
    </location>
</feature>
<feature type="short sequence motif" description="'KMSKS' region">
    <location>
        <begin position="650"/>
        <end position="654"/>
    </location>
</feature>
<feature type="binding site" evidence="1">
    <location>
        <position position="653"/>
    </location>
    <ligand>
        <name>ATP</name>
        <dbReference type="ChEBI" id="CHEBI:30616"/>
    </ligand>
</feature>
<feature type="helix" evidence="2">
    <location>
        <begin position="7"/>
        <end position="19"/>
    </location>
</feature>
<feature type="turn" evidence="2">
    <location>
        <begin position="20"/>
        <end position="23"/>
    </location>
</feature>
<feature type="helix" evidence="2">
    <location>
        <begin position="27"/>
        <end position="29"/>
    </location>
</feature>
<feature type="helix" evidence="2">
    <location>
        <begin position="32"/>
        <end position="34"/>
    </location>
</feature>
<feature type="strand" evidence="2">
    <location>
        <begin position="35"/>
        <end position="40"/>
    </location>
</feature>
<feature type="helix" evidence="2">
    <location>
        <begin position="51"/>
        <end position="70"/>
    </location>
</feature>
<feature type="strand" evidence="2">
    <location>
        <begin position="73"/>
        <end position="75"/>
    </location>
</feature>
<feature type="helix" evidence="2">
    <location>
        <begin position="86"/>
        <end position="95"/>
    </location>
</feature>
<feature type="helix" evidence="2">
    <location>
        <begin position="99"/>
        <end position="107"/>
    </location>
</feature>
<feature type="helix" evidence="2">
    <location>
        <begin position="113"/>
        <end position="117"/>
    </location>
</feature>
<feature type="helix" evidence="2">
    <location>
        <begin position="118"/>
        <end position="120"/>
    </location>
</feature>
<feature type="helix" evidence="2">
    <location>
        <begin position="122"/>
        <end position="139"/>
    </location>
</feature>
<feature type="helix" evidence="2">
    <location>
        <begin position="146"/>
        <end position="148"/>
    </location>
</feature>
<feature type="helix" evidence="2">
    <location>
        <begin position="157"/>
        <end position="172"/>
    </location>
</feature>
<feature type="strand" evidence="2">
    <location>
        <begin position="176"/>
        <end position="186"/>
    </location>
</feature>
<feature type="turn" evidence="2">
    <location>
        <begin position="187"/>
        <end position="190"/>
    </location>
</feature>
<feature type="strand" evidence="3">
    <location>
        <begin position="195"/>
        <end position="197"/>
    </location>
</feature>
<feature type="strand" evidence="2">
    <location>
        <begin position="206"/>
        <end position="215"/>
    </location>
</feature>
<feature type="strand" evidence="3">
    <location>
        <begin position="219"/>
        <end position="221"/>
    </location>
</feature>
<feature type="strand" evidence="2">
    <location>
        <begin position="224"/>
        <end position="230"/>
    </location>
</feature>
<feature type="helix" evidence="2">
    <location>
        <begin position="232"/>
        <end position="237"/>
    </location>
</feature>
<feature type="strand" evidence="2">
    <location>
        <begin position="240"/>
        <end position="243"/>
    </location>
</feature>
<feature type="strand" evidence="3">
    <location>
        <begin position="245"/>
        <end position="247"/>
    </location>
</feature>
<feature type="strand" evidence="2">
    <location>
        <begin position="249"/>
        <end position="256"/>
    </location>
</feature>
<feature type="strand" evidence="2">
    <location>
        <begin position="259"/>
        <end position="266"/>
    </location>
</feature>
<feature type="helix" evidence="2">
    <location>
        <begin position="267"/>
        <end position="273"/>
    </location>
</feature>
<feature type="strand" evidence="2">
    <location>
        <begin position="279"/>
        <end position="285"/>
    </location>
</feature>
<feature type="turn" evidence="2">
    <location>
        <begin position="287"/>
        <end position="293"/>
    </location>
</feature>
<feature type="strand" evidence="2">
    <location>
        <begin position="295"/>
        <end position="297"/>
    </location>
</feature>
<feature type="strand" evidence="2">
    <location>
        <begin position="299"/>
        <end position="301"/>
    </location>
</feature>
<feature type="strand" evidence="2">
    <location>
        <begin position="304"/>
        <end position="309"/>
    </location>
</feature>
<feature type="strand" evidence="3">
    <location>
        <begin position="315"/>
        <end position="317"/>
    </location>
</feature>
<feature type="strand" evidence="2">
    <location>
        <begin position="322"/>
        <end position="324"/>
    </location>
</feature>
<feature type="turn" evidence="2">
    <location>
        <begin position="326"/>
        <end position="328"/>
    </location>
</feature>
<feature type="helix" evidence="2">
    <location>
        <begin position="330"/>
        <end position="336"/>
    </location>
</feature>
<feature type="helix" evidence="2">
    <location>
        <begin position="380"/>
        <end position="382"/>
    </location>
</feature>
<feature type="helix" evidence="2">
    <location>
        <begin position="394"/>
        <end position="406"/>
    </location>
</feature>
<feature type="helix" evidence="2">
    <location>
        <begin position="413"/>
        <end position="415"/>
    </location>
</feature>
<feature type="strand" evidence="3">
    <location>
        <begin position="417"/>
        <end position="419"/>
    </location>
</feature>
<feature type="helix" evidence="2">
    <location>
        <begin position="420"/>
        <end position="432"/>
    </location>
</feature>
<feature type="turn" evidence="2">
    <location>
        <begin position="433"/>
        <end position="435"/>
    </location>
</feature>
<feature type="strand" evidence="2">
    <location>
        <begin position="436"/>
        <end position="446"/>
    </location>
</feature>
<feature type="strand" evidence="3">
    <location>
        <begin position="451"/>
        <end position="455"/>
    </location>
</feature>
<feature type="strand" evidence="2">
    <location>
        <begin position="457"/>
        <end position="467"/>
    </location>
</feature>
<feature type="helix" evidence="2">
    <location>
        <begin position="472"/>
        <end position="483"/>
    </location>
</feature>
<feature type="strand" evidence="2">
    <location>
        <begin position="485"/>
        <end position="489"/>
    </location>
</feature>
<feature type="helix" evidence="2">
    <location>
        <begin position="490"/>
        <end position="492"/>
    </location>
</feature>
<feature type="helix" evidence="2">
    <location>
        <begin position="493"/>
        <end position="502"/>
    </location>
</feature>
<feature type="strand" evidence="2">
    <location>
        <begin position="509"/>
        <end position="515"/>
    </location>
</feature>
<feature type="strand" evidence="2">
    <location>
        <begin position="521"/>
        <end position="526"/>
    </location>
</feature>
<feature type="turn" evidence="2">
    <location>
        <begin position="528"/>
        <end position="530"/>
    </location>
</feature>
<feature type="strand" evidence="2">
    <location>
        <begin position="531"/>
        <end position="534"/>
    </location>
</feature>
<feature type="helix" evidence="2">
    <location>
        <begin position="535"/>
        <end position="550"/>
    </location>
</feature>
<feature type="helix" evidence="2">
    <location>
        <begin position="556"/>
        <end position="558"/>
    </location>
</feature>
<feature type="helix" evidence="2">
    <location>
        <begin position="561"/>
        <end position="569"/>
    </location>
</feature>
<feature type="helix" evidence="2">
    <location>
        <begin position="574"/>
        <end position="584"/>
    </location>
</feature>
<feature type="helix" evidence="2">
    <location>
        <begin position="588"/>
        <end position="601"/>
    </location>
</feature>
<feature type="strand" evidence="2">
    <location>
        <begin position="605"/>
        <end position="610"/>
    </location>
</feature>
<feature type="helix" evidence="2">
    <location>
        <begin position="611"/>
        <end position="613"/>
    </location>
</feature>
<feature type="turn" evidence="2">
    <location>
        <begin position="614"/>
        <end position="616"/>
    </location>
</feature>
<feature type="helix" evidence="2">
    <location>
        <begin position="617"/>
        <end position="628"/>
    </location>
</feature>
<feature type="helix" evidence="2">
    <location>
        <begin position="631"/>
        <end position="633"/>
    </location>
</feature>
<feature type="strand" evidence="2">
    <location>
        <begin position="637"/>
        <end position="641"/>
    </location>
</feature>
<feature type="strand" evidence="2">
    <location>
        <begin position="644"/>
        <end position="646"/>
    </location>
</feature>
<feature type="turn" evidence="2">
    <location>
        <begin position="653"/>
        <end position="656"/>
    </location>
</feature>
<feature type="helix" evidence="2">
    <location>
        <begin position="661"/>
        <end position="668"/>
    </location>
</feature>
<feature type="helix" evidence="2">
    <location>
        <begin position="670"/>
        <end position="680"/>
    </location>
</feature>
<feature type="strand" evidence="2">
    <location>
        <begin position="687"/>
        <end position="689"/>
    </location>
</feature>
<feature type="helix" evidence="2">
    <location>
        <begin position="691"/>
        <end position="712"/>
    </location>
</feature>
<feature type="helix" evidence="2">
    <location>
        <begin position="724"/>
        <end position="745"/>
    </location>
</feature>
<feature type="helix" evidence="2">
    <location>
        <begin position="749"/>
        <end position="756"/>
    </location>
</feature>
<feature type="helix" evidence="2">
    <location>
        <begin position="758"/>
        <end position="770"/>
    </location>
</feature>
<feature type="turn" evidence="2">
    <location>
        <begin position="771"/>
        <end position="773"/>
    </location>
</feature>
<feature type="helix" evidence="2">
    <location>
        <begin position="777"/>
        <end position="794"/>
    </location>
</feature>
<feature type="turn" evidence="2">
    <location>
        <begin position="795"/>
        <end position="797"/>
    </location>
</feature>
<feature type="helix" evidence="2">
    <location>
        <begin position="799"/>
        <end position="808"/>
    </location>
</feature>
<feature type="helix" evidence="3">
    <location>
        <begin position="815"/>
        <end position="817"/>
    </location>
</feature>
<feature type="helix" evidence="3">
    <location>
        <begin position="830"/>
        <end position="851"/>
    </location>
</feature>
<feature type="strand" evidence="3">
    <location>
        <begin position="858"/>
        <end position="863"/>
    </location>
</feature>
<feature type="turn" evidence="3">
    <location>
        <begin position="867"/>
        <end position="873"/>
    </location>
</feature>
<feature type="helix" evidence="3">
    <location>
        <begin position="874"/>
        <end position="877"/>
    </location>
</feature>
<feature type="turn" evidence="3">
    <location>
        <begin position="878"/>
        <end position="880"/>
    </location>
</feature>
<feature type="strand" evidence="3">
    <location>
        <begin position="882"/>
        <end position="884"/>
    </location>
</feature>
<feature type="helix" evidence="3">
    <location>
        <begin position="885"/>
        <end position="891"/>
    </location>
</feature>
<feature type="turn" evidence="3">
    <location>
        <begin position="894"/>
        <end position="899"/>
    </location>
</feature>
<feature type="helix" evidence="3">
    <location>
        <begin position="900"/>
        <end position="902"/>
    </location>
</feature>
<feature type="helix" evidence="3">
    <location>
        <begin position="905"/>
        <end position="910"/>
    </location>
</feature>
<feature type="helix" evidence="3">
    <location>
        <begin position="922"/>
        <end position="927"/>
    </location>
</feature>
<feature type="turn" evidence="3">
    <location>
        <begin position="928"/>
        <end position="930"/>
    </location>
</feature>
<feature type="helix" evidence="3">
    <location>
        <begin position="931"/>
        <end position="938"/>
    </location>
</feature>
<feature type="strand" evidence="3">
    <location>
        <begin position="963"/>
        <end position="966"/>
    </location>
</feature>
<comment type="catalytic activity">
    <reaction evidence="1">
        <text>tRNA(Leu) + L-leucine + ATP = L-leucyl-tRNA(Leu) + AMP + diphosphate</text>
        <dbReference type="Rhea" id="RHEA:11688"/>
        <dbReference type="Rhea" id="RHEA-COMP:9613"/>
        <dbReference type="Rhea" id="RHEA-COMP:9622"/>
        <dbReference type="ChEBI" id="CHEBI:30616"/>
        <dbReference type="ChEBI" id="CHEBI:33019"/>
        <dbReference type="ChEBI" id="CHEBI:57427"/>
        <dbReference type="ChEBI" id="CHEBI:78442"/>
        <dbReference type="ChEBI" id="CHEBI:78494"/>
        <dbReference type="ChEBI" id="CHEBI:456215"/>
        <dbReference type="EC" id="6.1.1.4"/>
    </reaction>
</comment>
<comment type="subcellular location">
    <subcellularLocation>
        <location evidence="1">Cytoplasm</location>
    </subcellularLocation>
</comment>
<comment type="similarity">
    <text evidence="1">Belongs to the class-I aminoacyl-tRNA synthetase family.</text>
</comment>
<reference key="1">
    <citation type="journal article" date="1998" name="DNA Res.">
        <title>Complete sequence and gene organization of the genome of a hyper-thermophilic archaebacterium, Pyrococcus horikoshii OT3.</title>
        <authorList>
            <person name="Kawarabayasi Y."/>
            <person name="Sawada M."/>
            <person name="Horikawa H."/>
            <person name="Haikawa Y."/>
            <person name="Hino Y."/>
            <person name="Yamamoto S."/>
            <person name="Sekine M."/>
            <person name="Baba S."/>
            <person name="Kosugi H."/>
            <person name="Hosoyama A."/>
            <person name="Nagai Y."/>
            <person name="Sakai M."/>
            <person name="Ogura K."/>
            <person name="Otsuka R."/>
            <person name="Nakazawa H."/>
            <person name="Takamiya M."/>
            <person name="Ohfuku Y."/>
            <person name="Funahashi T."/>
            <person name="Tanaka T."/>
            <person name="Kudoh Y."/>
            <person name="Yamazaki J."/>
            <person name="Kushida N."/>
            <person name="Oguchi A."/>
            <person name="Aoki K."/>
            <person name="Yoshizawa T."/>
            <person name="Nakamura Y."/>
            <person name="Robb F.T."/>
            <person name="Horikoshi K."/>
            <person name="Masuchi Y."/>
            <person name="Shizuya H."/>
            <person name="Kikuchi H."/>
        </authorList>
    </citation>
    <scope>NUCLEOTIDE SEQUENCE [LARGE SCALE GENOMIC DNA]</scope>
    <source>
        <strain>ATCC 700860 / DSM 12428 / JCM 9974 / NBRC 100139 / OT-3</strain>
    </source>
</reference>
<reference key="2">
    <citation type="submission" date="2005-09" db="PDB data bank">
        <title>The crystal structure of leucyl-tRNA synthetase and tRNA(leucine) complex.</title>
        <authorList>
            <consortium name="RIKEN structural genomics initiative (RSGI)"/>
        </authorList>
    </citation>
    <scope>X-RAY CRYSTALLOGRAPHY (3.21 ANGSTROMS)</scope>
</reference>
<gene>
    <name evidence="1" type="primary">leuS</name>
    <name type="ordered locus">PH0965</name>
</gene>
<accession>O58698</accession>
<protein>
    <recommendedName>
        <fullName evidence="1">Leucine--tRNA ligase</fullName>
        <ecNumber evidence="1">6.1.1.4</ecNumber>
    </recommendedName>
    <alternativeName>
        <fullName evidence="1">Leucyl-tRNA synthetase</fullName>
        <shortName evidence="1">LeuRS</shortName>
    </alternativeName>
</protein>
<dbReference type="EC" id="6.1.1.4" evidence="1"/>
<dbReference type="EMBL" id="BA000001">
    <property type="protein sequence ID" value="BAA30062.1"/>
    <property type="molecule type" value="Genomic_DNA"/>
</dbReference>
<dbReference type="PIR" id="H71087">
    <property type="entry name" value="H71087"/>
</dbReference>
<dbReference type="RefSeq" id="WP_010885055.1">
    <property type="nucleotide sequence ID" value="NC_000961.1"/>
</dbReference>
<dbReference type="PDB" id="1WKB">
    <property type="method" value="X-ray"/>
    <property type="resolution" value="2.05 A"/>
    <property type="chains" value="A=1-810"/>
</dbReference>
<dbReference type="PDB" id="1WZ2">
    <property type="method" value="X-ray"/>
    <property type="resolution" value="3.21 A"/>
    <property type="chains" value="A/B=1-967"/>
</dbReference>
<dbReference type="PDBsum" id="1WKB"/>
<dbReference type="PDBsum" id="1WZ2"/>
<dbReference type="SMR" id="O58698"/>
<dbReference type="STRING" id="70601.gene:9377920"/>
<dbReference type="EnsemblBacteria" id="BAA30062">
    <property type="protein sequence ID" value="BAA30062"/>
    <property type="gene ID" value="BAA30062"/>
</dbReference>
<dbReference type="GeneID" id="1443290"/>
<dbReference type="KEGG" id="pho:PH0965"/>
<dbReference type="eggNOG" id="arCOG00809">
    <property type="taxonomic scope" value="Archaea"/>
</dbReference>
<dbReference type="OrthoDB" id="23906at2157"/>
<dbReference type="BRENDA" id="6.1.1.4">
    <property type="organism ID" value="5244"/>
</dbReference>
<dbReference type="EvolutionaryTrace" id="O58698"/>
<dbReference type="Proteomes" id="UP000000752">
    <property type="component" value="Chromosome"/>
</dbReference>
<dbReference type="GO" id="GO:0005737">
    <property type="term" value="C:cytoplasm"/>
    <property type="evidence" value="ECO:0007669"/>
    <property type="project" value="UniProtKB-SubCell"/>
</dbReference>
<dbReference type="GO" id="GO:0002161">
    <property type="term" value="F:aminoacyl-tRNA deacylase activity"/>
    <property type="evidence" value="ECO:0007669"/>
    <property type="project" value="InterPro"/>
</dbReference>
<dbReference type="GO" id="GO:0005524">
    <property type="term" value="F:ATP binding"/>
    <property type="evidence" value="ECO:0007669"/>
    <property type="project" value="UniProtKB-UniRule"/>
</dbReference>
<dbReference type="GO" id="GO:0004823">
    <property type="term" value="F:leucine-tRNA ligase activity"/>
    <property type="evidence" value="ECO:0007669"/>
    <property type="project" value="UniProtKB-UniRule"/>
</dbReference>
<dbReference type="GO" id="GO:0006429">
    <property type="term" value="P:leucyl-tRNA aminoacylation"/>
    <property type="evidence" value="ECO:0007669"/>
    <property type="project" value="UniProtKB-UniRule"/>
</dbReference>
<dbReference type="CDD" id="cd07959">
    <property type="entry name" value="Anticodon_Ia_Leu_AEc"/>
    <property type="match status" value="1"/>
</dbReference>
<dbReference type="CDD" id="cd00812">
    <property type="entry name" value="LeuRS_core"/>
    <property type="match status" value="1"/>
</dbReference>
<dbReference type="FunFam" id="1.10.730.10:FF:000051">
    <property type="entry name" value="Leucine--tRNA ligase"/>
    <property type="match status" value="1"/>
</dbReference>
<dbReference type="FunFam" id="3.90.740.10:FF:000024">
    <property type="entry name" value="Leucine--tRNA ligase"/>
    <property type="match status" value="1"/>
</dbReference>
<dbReference type="Gene3D" id="3.30.2320.20">
    <property type="entry name" value="Class I aminoacyl-tRNA synthetases (RS)"/>
    <property type="match status" value="1"/>
</dbReference>
<dbReference type="Gene3D" id="3.40.50.620">
    <property type="entry name" value="HUPs"/>
    <property type="match status" value="1"/>
</dbReference>
<dbReference type="Gene3D" id="1.10.730.10">
    <property type="entry name" value="Isoleucyl-tRNA Synthetase, Domain 1"/>
    <property type="match status" value="1"/>
</dbReference>
<dbReference type="Gene3D" id="1.10.10.720">
    <property type="entry name" value="leucyl-tRNA synthetase"/>
    <property type="match status" value="1"/>
</dbReference>
<dbReference type="Gene3D" id="3.90.740.10">
    <property type="entry name" value="Valyl/Leucyl/Isoleucyl-tRNA synthetase, editing domain"/>
    <property type="match status" value="1"/>
</dbReference>
<dbReference type="HAMAP" id="MF_00049_A">
    <property type="entry name" value="Leu_tRNA_synth_A"/>
    <property type="match status" value="1"/>
</dbReference>
<dbReference type="InterPro" id="IPR001412">
    <property type="entry name" value="aa-tRNA-synth_I_CS"/>
</dbReference>
<dbReference type="InterPro" id="IPR002300">
    <property type="entry name" value="aa-tRNA-synth_Ia"/>
</dbReference>
<dbReference type="InterPro" id="IPR020791">
    <property type="entry name" value="Leu-tRNA-lgase_arc"/>
</dbReference>
<dbReference type="InterPro" id="IPR004493">
    <property type="entry name" value="Leu-tRNA-synth_Ia_arc/euk"/>
</dbReference>
<dbReference type="InterPro" id="IPR013155">
    <property type="entry name" value="M/V/L/I-tRNA-synth_anticd-bd"/>
</dbReference>
<dbReference type="InterPro" id="IPR014729">
    <property type="entry name" value="Rossmann-like_a/b/a_fold"/>
</dbReference>
<dbReference type="InterPro" id="IPR009080">
    <property type="entry name" value="tRNAsynth_Ia_anticodon-bd"/>
</dbReference>
<dbReference type="InterPro" id="IPR009008">
    <property type="entry name" value="Val/Leu/Ile-tRNA-synth_edit"/>
</dbReference>
<dbReference type="NCBIfam" id="TIGR00395">
    <property type="entry name" value="leuS_arch"/>
    <property type="match status" value="1"/>
</dbReference>
<dbReference type="NCBIfam" id="NF008957">
    <property type="entry name" value="PRK12300.1"/>
    <property type="match status" value="1"/>
</dbReference>
<dbReference type="PANTHER" id="PTHR45794:SF1">
    <property type="entry name" value="LEUCINE--TRNA LIGASE, CYTOPLASMIC"/>
    <property type="match status" value="1"/>
</dbReference>
<dbReference type="PANTHER" id="PTHR45794">
    <property type="entry name" value="LEUCYL-TRNA SYNTHETASE"/>
    <property type="match status" value="1"/>
</dbReference>
<dbReference type="Pfam" id="PF08264">
    <property type="entry name" value="Anticodon_1"/>
    <property type="match status" value="1"/>
</dbReference>
<dbReference type="Pfam" id="PF00133">
    <property type="entry name" value="tRNA-synt_1"/>
    <property type="match status" value="1"/>
</dbReference>
<dbReference type="SUPFAM" id="SSF47323">
    <property type="entry name" value="Anticodon-binding domain of a subclass of class I aminoacyl-tRNA synthetases"/>
    <property type="match status" value="1"/>
</dbReference>
<dbReference type="SUPFAM" id="SSF52374">
    <property type="entry name" value="Nucleotidylyl transferase"/>
    <property type="match status" value="1"/>
</dbReference>
<dbReference type="SUPFAM" id="SSF50677">
    <property type="entry name" value="ValRS/IleRS/LeuRS editing domain"/>
    <property type="match status" value="1"/>
</dbReference>
<dbReference type="PROSITE" id="PS00178">
    <property type="entry name" value="AA_TRNA_LIGASE_I"/>
    <property type="match status" value="1"/>
</dbReference>
<organism>
    <name type="scientific">Pyrococcus horikoshii (strain ATCC 700860 / DSM 12428 / JCM 9974 / NBRC 100139 / OT-3)</name>
    <dbReference type="NCBI Taxonomy" id="70601"/>
    <lineage>
        <taxon>Archaea</taxon>
        <taxon>Methanobacteriati</taxon>
        <taxon>Methanobacteriota</taxon>
        <taxon>Thermococci</taxon>
        <taxon>Thermococcales</taxon>
        <taxon>Thermococcaceae</taxon>
        <taxon>Pyrococcus</taxon>
    </lineage>
</organism>
<evidence type="ECO:0000255" key="1">
    <source>
        <dbReference type="HAMAP-Rule" id="MF_00049"/>
    </source>
</evidence>
<evidence type="ECO:0007829" key="2">
    <source>
        <dbReference type="PDB" id="1WKB"/>
    </source>
</evidence>
<evidence type="ECO:0007829" key="3">
    <source>
        <dbReference type="PDB" id="1WZ2"/>
    </source>
</evidence>
<proteinExistence type="evidence at protein level"/>
<sequence length="967" mass="113949">MAELNFKAIEEKWQKRWLEAKIFEPNIRDKPKEKKFYITVAFPYLSGHLHVGHARTYTIPDVIARFKRMQGYNVLFPMAWHITGSPIVGIAERIKNRDPKTIWIYRDVYKVPEEILWTFEDPINIVKYFMKAAKETFIRAGFSVDWSREFYTTSLFPPFSKFIEWQFWKLKEKGYIVKGAHRVRWDPVVGTPLGDHDLMEGEDVPILDYIIIKFELRENGEVIYLPAATLRPETVYGVTNMWVNPNATYVKAKVRRKDKEETWIVSKEAAYKLSFQDREIEVIEEFKGEKLIGKYVRNPVSGDEVIILPAEFVDPDNATGVVMSVPAHAPFDHVALEDLKRETEILEKYDIDPRIVENITYISLIKLEGYGDFPAVEEVNKLGIKSQKDKEKLEQATKTIYKAEYHKGIFKVPPYEGKPVQEVKEAIAKEMLEKGIAEIMYEFAEKNVISRFGNRAVIKIIHDQWFIDYGNPEWKEKARKALERMKILPETRRAQFEAIIDWLDKKACARKIGLGTPLPWDPEWVIESLSDSTIYMAYYTISRHINKLRQEGKLDPEKLTPEFFDYIFLEEFSEDKEKELEKKTGIPAEIIHEMKEEFEYWYPLDWRCSGKDLIPNHLTFFIFNHVAIFREEHWPKGIAVNGFGTLEGQKMSKSKGNVLNFIDAIEENGADVVRLYIMSLAEHDSDFDWRRKEVGKLRKQIERFYELISQFAEYEVKGNVELKDIDRWMLHRLNKAIKETTNALEEFRTRTAVQWAFYSIMNDLRWYLRRTEGRDDEAKRYVLRTLADVWVRLMAPFTPHICEELWEKLGGEGFVSLAKWPEPVEEWWNETIEAEEEFIRSVMEDIKEIIEVAKIENAKRAYIYTAEDWKWKVAEVVSEKRDFKSSMEELMKDSEIRKHGKEVAKIVQKLIKERTFDVKRINEEKALREAKEFMEKELGIEIIINPTEDKGGKKKQAMPLKPAIFIE</sequence>
<keyword id="KW-0002">3D-structure</keyword>
<keyword id="KW-0030">Aminoacyl-tRNA synthetase</keyword>
<keyword id="KW-0067">ATP-binding</keyword>
<keyword id="KW-0963">Cytoplasm</keyword>
<keyword id="KW-0436">Ligase</keyword>
<keyword id="KW-0547">Nucleotide-binding</keyword>
<keyword id="KW-0648">Protein biosynthesis</keyword>
<name>SYL_PYRHO</name>